<reference key="1">
    <citation type="journal article" date="2001" name="Mol. Phylogenet. Evol.">
        <title>Phylogenetic relationships of the five extant rhinoceros species (Rhinocerotidae, Perissodactyla) based on mitochondrial cytochrome b and 12S rRNA genes.</title>
        <authorList>
            <person name="Tougard C."/>
            <person name="Delefosse T."/>
            <person name="Hanni C."/>
            <person name="Montgelard C."/>
        </authorList>
    </citation>
    <scope>NUCLEOTIDE SEQUENCE [GENOMIC DNA]</scope>
    <source>
        <tissue>Bone</tissue>
    </source>
</reference>
<keyword id="KW-0249">Electron transport</keyword>
<keyword id="KW-0349">Heme</keyword>
<keyword id="KW-0408">Iron</keyword>
<keyword id="KW-0472">Membrane</keyword>
<keyword id="KW-0479">Metal-binding</keyword>
<keyword id="KW-0496">Mitochondrion</keyword>
<keyword id="KW-0999">Mitochondrion inner membrane</keyword>
<keyword id="KW-0679">Respiratory chain</keyword>
<keyword id="KW-0812">Transmembrane</keyword>
<keyword id="KW-1133">Transmembrane helix</keyword>
<keyword id="KW-0813">Transport</keyword>
<keyword id="KW-0830">Ubiquinone</keyword>
<sequence length="379" mass="42687">MTNIRKSHPLIKIINHSFIDLPTPSNISSWWNFSSLLGICLILQILTGLFLAMHYTPDTTTAFSSVAHICRDVNYGWMIRYLHANGASMFFICLFIHVGRGLYYGSHTFLETWNIGIILLLTLMATAFMGYVLPWGQMSFWGATVITNLLSAIPYIGTNLVEWIWGGFSVDKATLTRFFAFHFILPFIILALAITHLLFLHETGSNNPSGIPSNTDKIPFHPYYTIKDILGALLLIMVLLTLVLFSPDILGDPDNYIPANPLSTPPHIKPEWYFLFAYAILRSIPNKLGGVLALTFSILILLLIPSLHTSKQRSMMFRPLSQCMFWLLVADLLTLTWIGGQPVEHPFIIIGQLASILYFSLILVLMPLAGIIENSLLKW</sequence>
<dbReference type="EMBL" id="AJ245725">
    <property type="protein sequence ID" value="CAC17809.1"/>
    <property type="molecule type" value="Genomic_DNA"/>
</dbReference>
<dbReference type="SMR" id="Q9G2R8"/>
<dbReference type="GO" id="GO:0005743">
    <property type="term" value="C:mitochondrial inner membrane"/>
    <property type="evidence" value="ECO:0007669"/>
    <property type="project" value="UniProtKB-SubCell"/>
</dbReference>
<dbReference type="GO" id="GO:0045275">
    <property type="term" value="C:respiratory chain complex III"/>
    <property type="evidence" value="ECO:0007669"/>
    <property type="project" value="InterPro"/>
</dbReference>
<dbReference type="GO" id="GO:0046872">
    <property type="term" value="F:metal ion binding"/>
    <property type="evidence" value="ECO:0007669"/>
    <property type="project" value="UniProtKB-KW"/>
</dbReference>
<dbReference type="GO" id="GO:0008121">
    <property type="term" value="F:ubiquinol-cytochrome-c reductase activity"/>
    <property type="evidence" value="ECO:0007669"/>
    <property type="project" value="InterPro"/>
</dbReference>
<dbReference type="GO" id="GO:0006122">
    <property type="term" value="P:mitochondrial electron transport, ubiquinol to cytochrome c"/>
    <property type="evidence" value="ECO:0007669"/>
    <property type="project" value="TreeGrafter"/>
</dbReference>
<dbReference type="CDD" id="cd00290">
    <property type="entry name" value="cytochrome_b_C"/>
    <property type="match status" value="1"/>
</dbReference>
<dbReference type="CDD" id="cd00284">
    <property type="entry name" value="Cytochrome_b_N"/>
    <property type="match status" value="1"/>
</dbReference>
<dbReference type="FunFam" id="1.20.810.10:FF:000002">
    <property type="entry name" value="Cytochrome b"/>
    <property type="match status" value="1"/>
</dbReference>
<dbReference type="Gene3D" id="1.20.810.10">
    <property type="entry name" value="Cytochrome Bc1 Complex, Chain C"/>
    <property type="match status" value="1"/>
</dbReference>
<dbReference type="InterPro" id="IPR005798">
    <property type="entry name" value="Cyt_b/b6_C"/>
</dbReference>
<dbReference type="InterPro" id="IPR036150">
    <property type="entry name" value="Cyt_b/b6_C_sf"/>
</dbReference>
<dbReference type="InterPro" id="IPR005797">
    <property type="entry name" value="Cyt_b/b6_N"/>
</dbReference>
<dbReference type="InterPro" id="IPR027387">
    <property type="entry name" value="Cytb/b6-like_sf"/>
</dbReference>
<dbReference type="InterPro" id="IPR030689">
    <property type="entry name" value="Cytochrome_b"/>
</dbReference>
<dbReference type="InterPro" id="IPR048260">
    <property type="entry name" value="Cytochrome_b_C_euk/bac"/>
</dbReference>
<dbReference type="InterPro" id="IPR048259">
    <property type="entry name" value="Cytochrome_b_N_euk/bac"/>
</dbReference>
<dbReference type="InterPro" id="IPR016174">
    <property type="entry name" value="Di-haem_cyt_TM"/>
</dbReference>
<dbReference type="PANTHER" id="PTHR19271">
    <property type="entry name" value="CYTOCHROME B"/>
    <property type="match status" value="1"/>
</dbReference>
<dbReference type="PANTHER" id="PTHR19271:SF16">
    <property type="entry name" value="CYTOCHROME B"/>
    <property type="match status" value="1"/>
</dbReference>
<dbReference type="Pfam" id="PF00032">
    <property type="entry name" value="Cytochrom_B_C"/>
    <property type="match status" value="1"/>
</dbReference>
<dbReference type="Pfam" id="PF00033">
    <property type="entry name" value="Cytochrome_B"/>
    <property type="match status" value="1"/>
</dbReference>
<dbReference type="PIRSF" id="PIRSF038885">
    <property type="entry name" value="COB"/>
    <property type="match status" value="1"/>
</dbReference>
<dbReference type="SUPFAM" id="SSF81648">
    <property type="entry name" value="a domain/subunit of cytochrome bc1 complex (Ubiquinol-cytochrome c reductase)"/>
    <property type="match status" value="1"/>
</dbReference>
<dbReference type="SUPFAM" id="SSF81342">
    <property type="entry name" value="Transmembrane di-heme cytochromes"/>
    <property type="match status" value="1"/>
</dbReference>
<dbReference type="PROSITE" id="PS51003">
    <property type="entry name" value="CYTB_CTER"/>
    <property type="match status" value="1"/>
</dbReference>
<dbReference type="PROSITE" id="PS51002">
    <property type="entry name" value="CYTB_NTER"/>
    <property type="match status" value="1"/>
</dbReference>
<gene>
    <name type="primary">MT-CYB</name>
    <name type="synonym">COB</name>
    <name type="synonym">CYTB</name>
    <name type="synonym">MTCYB</name>
</gene>
<comment type="function">
    <text evidence="2">Component of the ubiquinol-cytochrome c reductase complex (complex III or cytochrome b-c1 complex) that is part of the mitochondrial respiratory chain. The b-c1 complex mediates electron transfer from ubiquinol to cytochrome c. Contributes to the generation of a proton gradient across the mitochondrial membrane that is then used for ATP synthesis.</text>
</comment>
<comment type="cofactor">
    <cofactor evidence="2">
        <name>heme b</name>
        <dbReference type="ChEBI" id="CHEBI:60344"/>
    </cofactor>
    <text evidence="2">Binds 2 heme b groups non-covalently.</text>
</comment>
<comment type="subunit">
    <text evidence="2">The cytochrome bc1 complex contains 11 subunits: 3 respiratory subunits (MT-CYB, CYC1 and UQCRFS1), 2 core proteins (UQCRC1 and UQCRC2) and 6 low-molecular weight proteins (UQCRH/QCR6, UQCRB/QCR7, UQCRQ/QCR8, UQCR10/QCR9, UQCR11/QCR10 and a cleavage product of UQCRFS1). This cytochrome bc1 complex then forms a dimer.</text>
</comment>
<comment type="subcellular location">
    <subcellularLocation>
        <location evidence="2">Mitochondrion inner membrane</location>
        <topology evidence="2">Multi-pass membrane protein</topology>
    </subcellularLocation>
</comment>
<comment type="miscellaneous">
    <text evidence="1">Heme 1 (or BL or b562) is low-potential and absorbs at about 562 nm, and heme 2 (or BH or b566) is high-potential and absorbs at about 566 nm.</text>
</comment>
<comment type="similarity">
    <text evidence="3 4">Belongs to the cytochrome b family.</text>
</comment>
<comment type="caution">
    <text evidence="2">The full-length protein contains only eight transmembrane helices, not nine as predicted by bioinformatics tools.</text>
</comment>
<evidence type="ECO:0000250" key="1"/>
<evidence type="ECO:0000250" key="2">
    <source>
        <dbReference type="UniProtKB" id="P00157"/>
    </source>
</evidence>
<evidence type="ECO:0000255" key="3">
    <source>
        <dbReference type="PROSITE-ProRule" id="PRU00967"/>
    </source>
</evidence>
<evidence type="ECO:0000255" key="4">
    <source>
        <dbReference type="PROSITE-ProRule" id="PRU00968"/>
    </source>
</evidence>
<feature type="chain" id="PRO_0000061503" description="Cytochrome b">
    <location>
        <begin position="1"/>
        <end position="379"/>
    </location>
</feature>
<feature type="transmembrane region" description="Helical" evidence="2">
    <location>
        <begin position="33"/>
        <end position="53"/>
    </location>
</feature>
<feature type="transmembrane region" description="Helical" evidence="2">
    <location>
        <begin position="77"/>
        <end position="98"/>
    </location>
</feature>
<feature type="transmembrane region" description="Helical" evidence="2">
    <location>
        <begin position="113"/>
        <end position="133"/>
    </location>
</feature>
<feature type="transmembrane region" description="Helical" evidence="2">
    <location>
        <begin position="178"/>
        <end position="198"/>
    </location>
</feature>
<feature type="transmembrane region" description="Helical" evidence="2">
    <location>
        <begin position="226"/>
        <end position="246"/>
    </location>
</feature>
<feature type="transmembrane region" description="Helical" evidence="2">
    <location>
        <begin position="288"/>
        <end position="308"/>
    </location>
</feature>
<feature type="transmembrane region" description="Helical" evidence="2">
    <location>
        <begin position="320"/>
        <end position="340"/>
    </location>
</feature>
<feature type="transmembrane region" description="Helical" evidence="2">
    <location>
        <begin position="347"/>
        <end position="367"/>
    </location>
</feature>
<feature type="binding site" description="axial binding residue" evidence="2">
    <location>
        <position position="83"/>
    </location>
    <ligand>
        <name>heme b</name>
        <dbReference type="ChEBI" id="CHEBI:60344"/>
        <label>b562</label>
    </ligand>
    <ligandPart>
        <name>Fe</name>
        <dbReference type="ChEBI" id="CHEBI:18248"/>
    </ligandPart>
</feature>
<feature type="binding site" description="axial binding residue" evidence="2">
    <location>
        <position position="97"/>
    </location>
    <ligand>
        <name>heme b</name>
        <dbReference type="ChEBI" id="CHEBI:60344"/>
        <label>b566</label>
    </ligand>
    <ligandPart>
        <name>Fe</name>
        <dbReference type="ChEBI" id="CHEBI:18248"/>
    </ligandPart>
</feature>
<feature type="binding site" description="axial binding residue" evidence="2">
    <location>
        <position position="182"/>
    </location>
    <ligand>
        <name>heme b</name>
        <dbReference type="ChEBI" id="CHEBI:60344"/>
        <label>b562</label>
    </ligand>
    <ligandPart>
        <name>Fe</name>
        <dbReference type="ChEBI" id="CHEBI:18248"/>
    </ligandPart>
</feature>
<feature type="binding site" description="axial binding residue" evidence="2">
    <location>
        <position position="196"/>
    </location>
    <ligand>
        <name>heme b</name>
        <dbReference type="ChEBI" id="CHEBI:60344"/>
        <label>b566</label>
    </ligand>
    <ligandPart>
        <name>Fe</name>
        <dbReference type="ChEBI" id="CHEBI:18248"/>
    </ligandPart>
</feature>
<feature type="binding site" evidence="2">
    <location>
        <position position="201"/>
    </location>
    <ligand>
        <name>a ubiquinone</name>
        <dbReference type="ChEBI" id="CHEBI:16389"/>
    </ligand>
</feature>
<proteinExistence type="inferred from homology"/>
<accession>Q9G2R8</accession>
<organism>
    <name type="scientific">Rhinoceros sondaicus</name>
    <name type="common">Javan rhinoceros</name>
    <dbReference type="NCBI Taxonomy" id="102233"/>
    <lineage>
        <taxon>Eukaryota</taxon>
        <taxon>Metazoa</taxon>
        <taxon>Chordata</taxon>
        <taxon>Craniata</taxon>
        <taxon>Vertebrata</taxon>
        <taxon>Euteleostomi</taxon>
        <taxon>Mammalia</taxon>
        <taxon>Eutheria</taxon>
        <taxon>Laurasiatheria</taxon>
        <taxon>Perissodactyla</taxon>
        <taxon>Rhinocerotidae</taxon>
        <taxon>Rhinoceros</taxon>
    </lineage>
</organism>
<geneLocation type="mitochondrion"/>
<protein>
    <recommendedName>
        <fullName>Cytochrome b</fullName>
    </recommendedName>
    <alternativeName>
        <fullName>Complex III subunit 3</fullName>
    </alternativeName>
    <alternativeName>
        <fullName>Complex III subunit III</fullName>
    </alternativeName>
    <alternativeName>
        <fullName>Cytochrome b-c1 complex subunit 3</fullName>
    </alternativeName>
    <alternativeName>
        <fullName>Ubiquinol-cytochrome-c reductase complex cytochrome b subunit</fullName>
    </alternativeName>
</protein>
<name>CYB_RHISO</name>